<keyword id="KW-0560">Oxidoreductase</keyword>
<keyword id="KW-1185">Reference proteome</keyword>
<feature type="chain" id="PRO_0000054892" description="Uncharacterized short-chain type dehydrogenase/reductase R419">
    <location>
        <begin position="1"/>
        <end position="342"/>
    </location>
</feature>
<feature type="active site" description="Proton acceptor" evidence="1">
    <location>
        <position position="222"/>
    </location>
</feature>
<feature type="binding site" evidence="1">
    <location>
        <begin position="9"/>
        <end position="31"/>
    </location>
    <ligand>
        <name>NADP(+)</name>
        <dbReference type="ChEBI" id="CHEBI:58349"/>
    </ligand>
</feature>
<feature type="binding site" evidence="1">
    <location>
        <position position="208"/>
    </location>
    <ligand>
        <name>substrate</name>
    </ligand>
</feature>
<proteinExistence type="inferred from homology"/>
<protein>
    <recommendedName>
        <fullName>Uncharacterized short-chain type dehydrogenase/reductase R419</fullName>
        <ecNumber>1.-.-.-</ecNumber>
    </recommendedName>
</protein>
<name>YR419_MIMIV</name>
<evidence type="ECO:0000250" key="1"/>
<evidence type="ECO:0000305" key="2"/>
<organismHost>
    <name type="scientific">Acanthamoeba polyphaga</name>
    <name type="common">Amoeba</name>
    <dbReference type="NCBI Taxonomy" id="5757"/>
</organismHost>
<reference key="1">
    <citation type="journal article" date="2004" name="Science">
        <title>The 1.2-megabase genome sequence of Mimivirus.</title>
        <authorList>
            <person name="Raoult D."/>
            <person name="Audic S."/>
            <person name="Robert C."/>
            <person name="Abergel C."/>
            <person name="Renesto P."/>
            <person name="Ogata H."/>
            <person name="La Scola B."/>
            <person name="Susan M."/>
            <person name="Claverie J.-M."/>
        </authorList>
    </citation>
    <scope>NUCLEOTIDE SEQUENCE [LARGE SCALE GENOMIC DNA]</scope>
    <source>
        <strain>Rowbotham-Bradford</strain>
    </source>
</reference>
<accession>Q5UQM3</accession>
<organism>
    <name type="scientific">Acanthamoeba polyphaga mimivirus</name>
    <name type="common">APMV</name>
    <dbReference type="NCBI Taxonomy" id="212035"/>
    <lineage>
        <taxon>Viruses</taxon>
        <taxon>Varidnaviria</taxon>
        <taxon>Bamfordvirae</taxon>
        <taxon>Nucleocytoviricota</taxon>
        <taxon>Megaviricetes</taxon>
        <taxon>Imitervirales</taxon>
        <taxon>Mimiviridae</taxon>
        <taxon>Megamimivirinae</taxon>
        <taxon>Mimivirus</taxon>
        <taxon>Mimivirus bradfordmassiliense</taxon>
    </lineage>
</organism>
<comment type="similarity">
    <text evidence="2">Belongs to the short-chain dehydrogenases/reductases (SDR) family.</text>
</comment>
<gene>
    <name type="ordered locus">MIMI_R419</name>
</gene>
<dbReference type="EC" id="1.-.-.-"/>
<dbReference type="EMBL" id="AY653733">
    <property type="protein sequence ID" value="AAV50688.1"/>
    <property type="molecule type" value="Genomic_DNA"/>
</dbReference>
<dbReference type="SMR" id="Q5UQM3"/>
<dbReference type="KEGG" id="vg:9925040"/>
<dbReference type="OrthoDB" id="9676at10239"/>
<dbReference type="Proteomes" id="UP000001134">
    <property type="component" value="Genome"/>
</dbReference>
<dbReference type="GO" id="GO:0016616">
    <property type="term" value="F:oxidoreductase activity, acting on the CH-OH group of donors, NAD or NADP as acceptor"/>
    <property type="evidence" value="ECO:0007669"/>
    <property type="project" value="TreeGrafter"/>
</dbReference>
<dbReference type="CDD" id="cd05233">
    <property type="entry name" value="SDR_c"/>
    <property type="match status" value="1"/>
</dbReference>
<dbReference type="Gene3D" id="3.40.50.720">
    <property type="entry name" value="NAD(P)-binding Rossmann-like Domain"/>
    <property type="match status" value="1"/>
</dbReference>
<dbReference type="InterPro" id="IPR036291">
    <property type="entry name" value="NAD(P)-bd_dom_sf"/>
</dbReference>
<dbReference type="InterPro" id="IPR002347">
    <property type="entry name" value="SDR_fam"/>
</dbReference>
<dbReference type="PANTHER" id="PTHR42760">
    <property type="entry name" value="SHORT-CHAIN DEHYDROGENASES/REDUCTASES FAMILY MEMBER"/>
    <property type="match status" value="1"/>
</dbReference>
<dbReference type="Pfam" id="PF00106">
    <property type="entry name" value="adh_short"/>
    <property type="match status" value="1"/>
</dbReference>
<dbReference type="Pfam" id="PF13561">
    <property type="entry name" value="adh_short_C2"/>
    <property type="match status" value="1"/>
</dbReference>
<dbReference type="PRINTS" id="PR00081">
    <property type="entry name" value="GDHRDH"/>
</dbReference>
<dbReference type="SUPFAM" id="SSF51735">
    <property type="entry name" value="NAD(P)-binding Rossmann-fold domains"/>
    <property type="match status" value="1"/>
</dbReference>
<sequence>MRFSDSVVLIFGGTTGIGLMTTIDFIIHNTSHIILASRSKWKWKRAIEKIQNIFGDLVNLSNEFNISVLNSTVEYIPCDIRIENDVKQTIQKTIDKYHYINVYFNNAGIQPTTGHTDGDITEIEIPSEKLFDGTIVYKISQNNSNNDNLNNDNSNNDNSSVCSTPASSYCENPIATFIMGMTFCLKHEVKFALEQKSNIPVSIINMSSRNGVNIPSSDRPIYSACKAFIHSMTQTIATQSAKLGIEKNRSIRVNCIAPGPILTPLEIPIFLPDKKNVFEPLSNLELQQFQEIGSHGVPMKRTGTTNEISPTVLFLADYNQSSYITGSTITIDGGYTASPLIG</sequence>